<protein>
    <recommendedName>
        <fullName>1-acyl-sn-glycerol-3-phosphate acyltransferase alpha</fullName>
        <ecNumber evidence="1">2.3.1.51</ecNumber>
    </recommendedName>
    <alternativeName>
        <fullName>1-acylglycerol-3-phosphate O-acyltransferase 1</fullName>
        <shortName>1-AGP acyltransferase 1</shortName>
        <shortName>1-AGPAT 1</shortName>
    </alternativeName>
    <alternativeName>
        <fullName evidence="1">Lysophosphatidic acid acyltransferase alpha</fullName>
        <shortName>LPAAT-alpha</shortName>
    </alternativeName>
</protein>
<organism>
    <name type="scientific">Ovis aries</name>
    <name type="common">Sheep</name>
    <dbReference type="NCBI Taxonomy" id="9940"/>
    <lineage>
        <taxon>Eukaryota</taxon>
        <taxon>Metazoa</taxon>
        <taxon>Chordata</taxon>
        <taxon>Craniata</taxon>
        <taxon>Vertebrata</taxon>
        <taxon>Euteleostomi</taxon>
        <taxon>Mammalia</taxon>
        <taxon>Eutheria</taxon>
        <taxon>Laurasiatheria</taxon>
        <taxon>Artiodactyla</taxon>
        <taxon>Ruminantia</taxon>
        <taxon>Pecora</taxon>
        <taxon>Bovidae</taxon>
        <taxon>Caprinae</taxon>
        <taxon>Ovis</taxon>
    </lineage>
</organism>
<comment type="function">
    <text evidence="1">Converts 1-acyl-sn-glycerol-3-phosphate (lysophosphatidic acid or LPA) into 1,2-diacyl-sn-glycerol-3-phosphate (phosphatidic acid or PA) by incorporating an acyl moiety at the sn-2 position of the glycerol backbone.</text>
</comment>
<comment type="catalytic activity">
    <reaction evidence="1">
        <text>a 1-acyl-sn-glycero-3-phosphate + an acyl-CoA = a 1,2-diacyl-sn-glycero-3-phosphate + CoA</text>
        <dbReference type="Rhea" id="RHEA:19709"/>
        <dbReference type="ChEBI" id="CHEBI:57287"/>
        <dbReference type="ChEBI" id="CHEBI:57970"/>
        <dbReference type="ChEBI" id="CHEBI:58342"/>
        <dbReference type="ChEBI" id="CHEBI:58608"/>
        <dbReference type="EC" id="2.3.1.51"/>
    </reaction>
    <physiologicalReaction direction="left-to-right" evidence="1">
        <dbReference type="Rhea" id="RHEA:19710"/>
    </physiologicalReaction>
</comment>
<comment type="catalytic activity">
    <reaction evidence="1">
        <text>1-(9Z-octadecenoyl)-sn-glycero-3-phosphate + (9Z)-octadecenoyl-CoA = 1,2-di-(9Z-octadecenoyl)-sn-glycero-3-phosphate + CoA</text>
        <dbReference type="Rhea" id="RHEA:37131"/>
        <dbReference type="ChEBI" id="CHEBI:57287"/>
        <dbReference type="ChEBI" id="CHEBI:57387"/>
        <dbReference type="ChEBI" id="CHEBI:74544"/>
        <dbReference type="ChEBI" id="CHEBI:74546"/>
    </reaction>
    <physiologicalReaction direction="left-to-right" evidence="1">
        <dbReference type="Rhea" id="RHEA:37132"/>
    </physiologicalReaction>
</comment>
<comment type="catalytic activity">
    <reaction evidence="1">
        <text>1-(9Z-octadecenoyl)-sn-glycero-3-phosphate + hexadecanoyl-CoA = 1-(9Z)-octadecenoyl-2-hexadecanoyl-sn-glycero-3-phosphate + CoA</text>
        <dbReference type="Rhea" id="RHEA:37143"/>
        <dbReference type="ChEBI" id="CHEBI:57287"/>
        <dbReference type="ChEBI" id="CHEBI:57379"/>
        <dbReference type="ChEBI" id="CHEBI:74544"/>
        <dbReference type="ChEBI" id="CHEBI:74551"/>
    </reaction>
    <physiologicalReaction direction="left-to-right" evidence="1">
        <dbReference type="Rhea" id="RHEA:37144"/>
    </physiologicalReaction>
</comment>
<comment type="catalytic activity">
    <reaction evidence="1">
        <text>heptadecanoyl-CoA + 1-(9Z-octadecenoyl)-sn-glycero-3-phosphate = 1-(9Z)-octadecenoyl-2-heptadecanoyl-sn-glycero-3-phosphate + CoA</text>
        <dbReference type="Rhea" id="RHEA:37155"/>
        <dbReference type="ChEBI" id="CHEBI:57287"/>
        <dbReference type="ChEBI" id="CHEBI:74307"/>
        <dbReference type="ChEBI" id="CHEBI:74544"/>
        <dbReference type="ChEBI" id="CHEBI:74558"/>
    </reaction>
    <physiologicalReaction direction="left-to-right" evidence="1">
        <dbReference type="Rhea" id="RHEA:37156"/>
    </physiologicalReaction>
</comment>
<comment type="catalytic activity">
    <reaction evidence="1">
        <text>1-(9Z-octadecenoyl)-sn-glycero-3-phosphate + octadecanoyl-CoA = 1-(9Z-octadecenoyl)-2-octadecanoyl-sn-glycero-3-phosphate + CoA</text>
        <dbReference type="Rhea" id="RHEA:37147"/>
        <dbReference type="ChEBI" id="CHEBI:57287"/>
        <dbReference type="ChEBI" id="CHEBI:57394"/>
        <dbReference type="ChEBI" id="CHEBI:74544"/>
        <dbReference type="ChEBI" id="CHEBI:74552"/>
    </reaction>
    <physiologicalReaction direction="left-to-right" evidence="1">
        <dbReference type="Rhea" id="RHEA:37148"/>
    </physiologicalReaction>
</comment>
<comment type="catalytic activity">
    <reaction evidence="1">
        <text>1-(9Z-octadecenoyl)-sn-glycero-3-phosphate + (9Z,12Z)-octadecadienoyl-CoA = 1-(9Z)-octadecenoyl-2-(9Z,12Z)-octadecadienoyl-sn-glycero-3-phosphate + CoA</text>
        <dbReference type="Rhea" id="RHEA:37159"/>
        <dbReference type="ChEBI" id="CHEBI:57287"/>
        <dbReference type="ChEBI" id="CHEBI:57383"/>
        <dbReference type="ChEBI" id="CHEBI:74544"/>
        <dbReference type="ChEBI" id="CHEBI:74563"/>
    </reaction>
    <physiologicalReaction direction="left-to-right" evidence="1">
        <dbReference type="Rhea" id="RHEA:37160"/>
    </physiologicalReaction>
</comment>
<comment type="catalytic activity">
    <reaction evidence="1">
        <text>1-(9Z-octadecenoyl)-sn-glycero-3-phosphate + tetradecanoyl-CoA = 1-(9Z)-octadecenoyl-2-tetradecanoyl-sn-glycero-3-phosphate + CoA</text>
        <dbReference type="Rhea" id="RHEA:37171"/>
        <dbReference type="ChEBI" id="CHEBI:57287"/>
        <dbReference type="ChEBI" id="CHEBI:57385"/>
        <dbReference type="ChEBI" id="CHEBI:74544"/>
        <dbReference type="ChEBI" id="CHEBI:74579"/>
    </reaction>
    <physiologicalReaction direction="left-to-right" evidence="1">
        <dbReference type="Rhea" id="RHEA:37172"/>
    </physiologicalReaction>
</comment>
<comment type="catalytic activity">
    <reaction evidence="1">
        <text>pentadecanoyl-CoA + 1-(9Z-octadecenoyl)-sn-glycero-3-phosphate = 1-(9Z)-octadecenoyl-2-pentadecanoyl-sn-glycero-3-phosphate + CoA</text>
        <dbReference type="Rhea" id="RHEA:37175"/>
        <dbReference type="ChEBI" id="CHEBI:57287"/>
        <dbReference type="ChEBI" id="CHEBI:74309"/>
        <dbReference type="ChEBI" id="CHEBI:74544"/>
        <dbReference type="ChEBI" id="CHEBI:74578"/>
    </reaction>
    <physiologicalReaction direction="left-to-right" evidence="1">
        <dbReference type="Rhea" id="RHEA:37176"/>
    </physiologicalReaction>
</comment>
<comment type="catalytic activity">
    <reaction evidence="1">
        <text>1-hexadecanoyl-sn-glycero-3-phosphate + (9Z)-octadecenoyl-CoA = 1-hexadecanoyl-2-(9Z-octadecenoyl)-sn-glycero-3-phosphate + CoA</text>
        <dbReference type="Rhea" id="RHEA:33187"/>
        <dbReference type="ChEBI" id="CHEBI:57287"/>
        <dbReference type="ChEBI" id="CHEBI:57387"/>
        <dbReference type="ChEBI" id="CHEBI:57518"/>
        <dbReference type="ChEBI" id="CHEBI:64839"/>
    </reaction>
    <physiologicalReaction direction="left-to-right" evidence="1">
        <dbReference type="Rhea" id="RHEA:33188"/>
    </physiologicalReaction>
</comment>
<comment type="catalytic activity">
    <reaction evidence="1">
        <text>1-(9Z,12Z,15Z)-octadecatrienoyl-sn-glycero-3-phosphate + (9Z)-octadecenoyl-CoA = 1-(9Z,12Z,15Z)-octadecatrienoyl-2-(9Z)-octadecenoyl-sn-glycero-3-phosphate + CoA</text>
        <dbReference type="Rhea" id="RHEA:37139"/>
        <dbReference type="ChEBI" id="CHEBI:57287"/>
        <dbReference type="ChEBI" id="CHEBI:57387"/>
        <dbReference type="ChEBI" id="CHEBI:74549"/>
        <dbReference type="ChEBI" id="CHEBI:74550"/>
    </reaction>
    <physiologicalReaction direction="left-to-right" evidence="1">
        <dbReference type="Rhea" id="RHEA:37140"/>
    </physiologicalReaction>
</comment>
<comment type="catalytic activity">
    <reaction evidence="1">
        <text>1-(6Z,9Z,12Z-octadecatrienoyl)-sn-glycero-3-phosphate + (9Z)-octadecenoyl-CoA = (6Z,9Z,12Z)-octadecatrienoyl-2-(9Z)-octadecenoyl-sn-glycero-3-phosphate + CoA</text>
        <dbReference type="Rhea" id="RHEA:37179"/>
        <dbReference type="ChEBI" id="CHEBI:57287"/>
        <dbReference type="ChEBI" id="CHEBI:57387"/>
        <dbReference type="ChEBI" id="CHEBI:74581"/>
        <dbReference type="ChEBI" id="CHEBI:74582"/>
    </reaction>
    <physiologicalReaction direction="left-to-right" evidence="1">
        <dbReference type="Rhea" id="RHEA:37180"/>
    </physiologicalReaction>
</comment>
<comment type="catalytic activity">
    <reaction evidence="1">
        <text>1-eicosanoyl-sn-glycero-3-phosphate + (9Z)-octadecenoyl-CoA = 1-eicosanoyl-2-(9Z)-octadecenoyl-sn-glycero-3-phosphate + CoA</text>
        <dbReference type="Rhea" id="RHEA:37183"/>
        <dbReference type="ChEBI" id="CHEBI:57287"/>
        <dbReference type="ChEBI" id="CHEBI:57387"/>
        <dbReference type="ChEBI" id="CHEBI:74583"/>
        <dbReference type="ChEBI" id="CHEBI:74584"/>
    </reaction>
    <physiologicalReaction direction="left-to-right" evidence="1">
        <dbReference type="Rhea" id="RHEA:37184"/>
    </physiologicalReaction>
</comment>
<comment type="catalytic activity">
    <reaction evidence="1">
        <text>1-tetradecanoyl-sn-glycerol 3-phosphate + (9Z)-octadecenoyl-CoA = 1-tetradecanoyl-2-(9Z)-octadecenoyl-sn-glycero-3-phosphate + CoA</text>
        <dbReference type="Rhea" id="RHEA:37187"/>
        <dbReference type="ChEBI" id="CHEBI:57287"/>
        <dbReference type="ChEBI" id="CHEBI:57387"/>
        <dbReference type="ChEBI" id="CHEBI:72683"/>
        <dbReference type="ChEBI" id="CHEBI:74586"/>
    </reaction>
    <physiologicalReaction direction="left-to-right" evidence="1">
        <dbReference type="Rhea" id="RHEA:37188"/>
    </physiologicalReaction>
</comment>
<comment type="catalytic activity">
    <reaction evidence="1">
        <text>1-(9Z-octadecenoyl)-sn-glycero-3-phosphate + (5Z,8Z,11Z,14Z)-eicosatetraenoyl-CoA = 1-(9Z)-octadecenoyl-2-(5Z,8Z,11Z,14Z)-eicosatetraenoyl-sn-glycero-3-phosphate + CoA</text>
        <dbReference type="Rhea" id="RHEA:37443"/>
        <dbReference type="ChEBI" id="CHEBI:57287"/>
        <dbReference type="ChEBI" id="CHEBI:57368"/>
        <dbReference type="ChEBI" id="CHEBI:74544"/>
        <dbReference type="ChEBI" id="CHEBI:74928"/>
    </reaction>
    <physiologicalReaction direction="left-to-right" evidence="1">
        <dbReference type="Rhea" id="RHEA:37444"/>
    </physiologicalReaction>
</comment>
<comment type="catalytic activity">
    <reaction evidence="1">
        <text>1-(9Z-octadecenoyl)-sn-glycero-3-phosphate + dodecanoyl-CoA = 1-(9Z)-octadecenoyl-2-dodecanoyl-sn-glycero-3-phosphate + CoA</text>
        <dbReference type="Rhea" id="RHEA:37591"/>
        <dbReference type="ChEBI" id="CHEBI:57287"/>
        <dbReference type="ChEBI" id="CHEBI:57375"/>
        <dbReference type="ChEBI" id="CHEBI:74544"/>
        <dbReference type="ChEBI" id="CHEBI:75076"/>
    </reaction>
    <physiologicalReaction direction="left-to-right" evidence="1">
        <dbReference type="Rhea" id="RHEA:37592"/>
    </physiologicalReaction>
</comment>
<comment type="catalytic activity">
    <reaction evidence="1">
        <text>(6Z)-octadecenoyl-CoA + 1-(9Z-octadecenoyl)-sn-glycero-3-phosphate = 1-(9Z)-octadecenoyl-2-(6Z)-octadecenoyl-sn-glycero-3-phosphate + CoA</text>
        <dbReference type="Rhea" id="RHEA:37607"/>
        <dbReference type="ChEBI" id="CHEBI:57287"/>
        <dbReference type="ChEBI" id="CHEBI:74544"/>
        <dbReference type="ChEBI" id="CHEBI:75123"/>
        <dbReference type="ChEBI" id="CHEBI:75124"/>
    </reaction>
    <physiologicalReaction direction="left-to-right" evidence="1">
        <dbReference type="Rhea" id="RHEA:37608"/>
    </physiologicalReaction>
</comment>
<comment type="catalytic activity">
    <reaction evidence="1">
        <text>(11Z)-octadecenoyl-CoA + 1-(9Z-octadecenoyl)-sn-glycero-3-phosphate = 1-(9Z)-octadecenoyl-2-(11Z)-octadecenoyl-sn-glycero-3-phosphate + CoA</text>
        <dbReference type="Rhea" id="RHEA:37603"/>
        <dbReference type="ChEBI" id="CHEBI:57287"/>
        <dbReference type="ChEBI" id="CHEBI:74544"/>
        <dbReference type="ChEBI" id="CHEBI:75121"/>
        <dbReference type="ChEBI" id="CHEBI:75122"/>
    </reaction>
    <physiologicalReaction direction="left-to-right" evidence="1">
        <dbReference type="Rhea" id="RHEA:37604"/>
    </physiologicalReaction>
</comment>
<comment type="catalytic activity">
    <reaction evidence="1">
        <text>(9Z)-hexadecenoyl-CoA + 1-(9Z-octadecenoyl)-sn-glycero-3-phosphate = 1-(9Z-octadecenoyl)-2-(9Z-hexadecenoyl)-sn-glycero-3-phosphate + CoA</text>
        <dbReference type="Rhea" id="RHEA:40195"/>
        <dbReference type="ChEBI" id="CHEBI:57287"/>
        <dbReference type="ChEBI" id="CHEBI:61540"/>
        <dbReference type="ChEBI" id="CHEBI:74544"/>
        <dbReference type="ChEBI" id="CHEBI:74697"/>
    </reaction>
    <physiologicalReaction direction="left-to-right" evidence="1">
        <dbReference type="Rhea" id="RHEA:40196"/>
    </physiologicalReaction>
</comment>
<comment type="pathway">
    <text>Phospholipid metabolism; CDP-diacylglycerol biosynthesis; CDP-diacylglycerol from sn-glycerol 3-phosphate: step 2/3.</text>
</comment>
<comment type="subcellular location">
    <subcellularLocation>
        <location evidence="1">Endoplasmic reticulum membrane</location>
        <topology evidence="3">Multi-pass membrane protein</topology>
    </subcellularLocation>
</comment>
<comment type="domain">
    <text evidence="2">The HXXXXD motif is essential for acyltransferase activity and may constitute the binding site for the phosphate moiety of the glycerol-3-phosphate.</text>
</comment>
<comment type="similarity">
    <text evidence="4">Belongs to the 1-acyl-sn-glycerol-3-phosphate acyltransferase family.</text>
</comment>
<gene>
    <name type="primary">AGPAT1</name>
</gene>
<keyword id="KW-0012">Acyltransferase</keyword>
<keyword id="KW-0256">Endoplasmic reticulum</keyword>
<keyword id="KW-0444">Lipid biosynthesis</keyword>
<keyword id="KW-0443">Lipid metabolism</keyword>
<keyword id="KW-0472">Membrane</keyword>
<keyword id="KW-0594">Phospholipid biosynthesis</keyword>
<keyword id="KW-1208">Phospholipid metabolism</keyword>
<keyword id="KW-1185">Reference proteome</keyword>
<keyword id="KW-0732">Signal</keyword>
<keyword id="KW-0808">Transferase</keyword>
<keyword id="KW-0812">Transmembrane</keyword>
<keyword id="KW-1133">Transmembrane helix</keyword>
<accession>Q95JH0</accession>
<feature type="signal peptide" evidence="3">
    <location>
        <begin position="1"/>
        <end position="26"/>
    </location>
</feature>
<feature type="chain" id="PRO_0000254019" description="1-acyl-sn-glycerol-3-phosphate acyltransferase alpha">
    <location>
        <begin position="27"/>
        <end position="287"/>
    </location>
</feature>
<feature type="topological domain" description="Lumenal" evidence="1">
    <location>
        <begin position="27"/>
        <end position="37"/>
    </location>
</feature>
<feature type="transmembrane region" description="Helical" evidence="3">
    <location>
        <begin position="38"/>
        <end position="58"/>
    </location>
</feature>
<feature type="topological domain" description="Cytoplasmic" evidence="1">
    <location>
        <begin position="59"/>
        <end position="127"/>
    </location>
</feature>
<feature type="transmembrane region" description="Helical" evidence="3">
    <location>
        <begin position="128"/>
        <end position="148"/>
    </location>
</feature>
<feature type="topological domain" description="Lumenal" evidence="1">
    <location>
        <begin position="149"/>
        <end position="192"/>
    </location>
</feature>
<feature type="short sequence motif" description="HXXXXD motif" evidence="2">
    <location>
        <begin position="104"/>
        <end position="109"/>
    </location>
</feature>
<feature type="short sequence motif" description="EGTR motif" evidence="1">
    <location>
        <begin position="178"/>
        <end position="181"/>
    </location>
</feature>
<evidence type="ECO:0000250" key="1">
    <source>
        <dbReference type="UniProtKB" id="Q99943"/>
    </source>
</evidence>
<evidence type="ECO:0000250" key="2">
    <source>
        <dbReference type="UniProtKB" id="Q9D517"/>
    </source>
</evidence>
<evidence type="ECO:0000255" key="3"/>
<evidence type="ECO:0000305" key="4"/>
<proteinExistence type="evidence at transcript level"/>
<dbReference type="EC" id="2.3.1.51" evidence="1"/>
<dbReference type="EMBL" id="AF285099">
    <property type="protein sequence ID" value="AAK58831.1"/>
    <property type="molecule type" value="mRNA"/>
</dbReference>
<dbReference type="RefSeq" id="NP_001009746.1">
    <property type="nucleotide sequence ID" value="NM_001009746.1"/>
</dbReference>
<dbReference type="SMR" id="Q95JH0"/>
<dbReference type="STRING" id="9940.ENSOARP00000000546"/>
<dbReference type="PaxDb" id="9940-ENSOARP00000000546"/>
<dbReference type="GeneID" id="443121"/>
<dbReference type="CTD" id="10554"/>
<dbReference type="eggNOG" id="KOG2848">
    <property type="taxonomic scope" value="Eukaryota"/>
</dbReference>
<dbReference type="OrthoDB" id="202234at2759"/>
<dbReference type="UniPathway" id="UPA00557">
    <property type="reaction ID" value="UER00613"/>
</dbReference>
<dbReference type="Proteomes" id="UP000002356">
    <property type="component" value="Unplaced"/>
</dbReference>
<dbReference type="GO" id="GO:0005783">
    <property type="term" value="C:endoplasmic reticulum"/>
    <property type="evidence" value="ECO:0000250"/>
    <property type="project" value="UniProtKB"/>
</dbReference>
<dbReference type="GO" id="GO:0005789">
    <property type="term" value="C:endoplasmic reticulum membrane"/>
    <property type="evidence" value="ECO:0007669"/>
    <property type="project" value="UniProtKB-SubCell"/>
</dbReference>
<dbReference type="GO" id="GO:0003841">
    <property type="term" value="F:1-acylglycerol-3-phosphate O-acyltransferase activity"/>
    <property type="evidence" value="ECO:0000250"/>
    <property type="project" value="UniProtKB"/>
</dbReference>
<dbReference type="GO" id="GO:0016024">
    <property type="term" value="P:CDP-diacylglycerol biosynthetic process"/>
    <property type="evidence" value="ECO:0007669"/>
    <property type="project" value="UniProtKB-UniPathway"/>
</dbReference>
<dbReference type="GO" id="GO:0006654">
    <property type="term" value="P:phosphatidic acid biosynthetic process"/>
    <property type="evidence" value="ECO:0007669"/>
    <property type="project" value="TreeGrafter"/>
</dbReference>
<dbReference type="CDD" id="cd07989">
    <property type="entry name" value="LPLAT_AGPAT-like"/>
    <property type="match status" value="1"/>
</dbReference>
<dbReference type="InterPro" id="IPR004552">
    <property type="entry name" value="AGP_acyltrans"/>
</dbReference>
<dbReference type="InterPro" id="IPR002123">
    <property type="entry name" value="Plipid/glycerol_acylTrfase"/>
</dbReference>
<dbReference type="NCBIfam" id="TIGR00530">
    <property type="entry name" value="AGP_acyltrn"/>
    <property type="match status" value="1"/>
</dbReference>
<dbReference type="PANTHER" id="PTHR10434">
    <property type="entry name" value="1-ACYL-SN-GLYCEROL-3-PHOSPHATE ACYLTRANSFERASE"/>
    <property type="match status" value="1"/>
</dbReference>
<dbReference type="PANTHER" id="PTHR10434:SF65">
    <property type="entry name" value="1-ACYL-SN-GLYCEROL-3-PHOSPHATE ACYLTRANSFERASE ALPHA"/>
    <property type="match status" value="1"/>
</dbReference>
<dbReference type="Pfam" id="PF01553">
    <property type="entry name" value="Acyltransferase"/>
    <property type="match status" value="1"/>
</dbReference>
<dbReference type="SMART" id="SM00563">
    <property type="entry name" value="PlsC"/>
    <property type="match status" value="1"/>
</dbReference>
<dbReference type="SUPFAM" id="SSF69593">
    <property type="entry name" value="Glycerol-3-phosphate (1)-acyltransferase"/>
    <property type="match status" value="1"/>
</dbReference>
<sequence length="287" mass="31986">MELWPGAGTLLLLLFLLLLLLLPTLWFCSPSAKYFFKMAFYNGWILFLAVLAIPVCAVRGRNVENMKILRLMLLHIKYLYGIRVEVRGAHHFPPSQPYVVVSNHQSSLDLLGMMEVLPGHCVPIAKRELLWAGSAGLACWLAGVIFIDRKRTGDAISVMSEVAQTLLTQDVRVWVFPEGTRNHNGSMLPFKRGAFHLAVQAQVPIVPIVMSSYQDFYCKKERRFTSGRCQVRVLPPVPTEGLKPDDVPALADRVRHSMLTVFREISTDGRGGGDYLKKPGGVGEAGL</sequence>
<reference key="1">
    <citation type="journal article" date="2002" name="J. Dairy Sci.">
        <title>Cloning and localization of the bovine and ovine lysophosphatidic acid acyltransferase (LPAAT) genes that codes for an enzyme involved in triglyceride biosynthesis.</title>
        <authorList>
            <person name="Mistry D.H."/>
            <person name="Medrano J.F."/>
        </authorList>
    </citation>
    <scope>NUCLEOTIDE SEQUENCE [MRNA]</scope>
    <source>
        <tissue>Mammary gland</tissue>
    </source>
</reference>
<name>PLCA_SHEEP</name>